<protein>
    <recommendedName>
        <fullName evidence="1">Nicotinate-nucleotide--dimethylbenzimidazole phosphoribosyltransferase</fullName>
        <shortName evidence="1">NN:DBI PRT</shortName>
        <ecNumber evidence="1">2.4.2.21</ecNumber>
    </recommendedName>
    <alternativeName>
        <fullName evidence="1">N(1)-alpha-phosphoribosyltransferase</fullName>
    </alternativeName>
</protein>
<dbReference type="EC" id="2.4.2.21" evidence="1"/>
<dbReference type="EMBL" id="CP001063">
    <property type="protein sequence ID" value="ACD08529.1"/>
    <property type="molecule type" value="Genomic_DNA"/>
</dbReference>
<dbReference type="RefSeq" id="WP_001193778.1">
    <property type="nucleotide sequence ID" value="NC_010658.1"/>
</dbReference>
<dbReference type="SMR" id="B2TWR0"/>
<dbReference type="STRING" id="344609.SbBS512_E0967"/>
<dbReference type="KEGG" id="sbc:SbBS512_E0967"/>
<dbReference type="HOGENOM" id="CLU_002982_0_0_6"/>
<dbReference type="UniPathway" id="UPA00061">
    <property type="reaction ID" value="UER00516"/>
</dbReference>
<dbReference type="Proteomes" id="UP000001030">
    <property type="component" value="Chromosome"/>
</dbReference>
<dbReference type="GO" id="GO:0008939">
    <property type="term" value="F:nicotinate-nucleotide-dimethylbenzimidazole phosphoribosyltransferase activity"/>
    <property type="evidence" value="ECO:0007669"/>
    <property type="project" value="UniProtKB-UniRule"/>
</dbReference>
<dbReference type="GO" id="GO:0009236">
    <property type="term" value="P:cobalamin biosynthetic process"/>
    <property type="evidence" value="ECO:0007669"/>
    <property type="project" value="UniProtKB-KW"/>
</dbReference>
<dbReference type="CDD" id="cd02439">
    <property type="entry name" value="DMB-PRT_CobT"/>
    <property type="match status" value="1"/>
</dbReference>
<dbReference type="FunFam" id="1.10.1610.10:FF:000001">
    <property type="entry name" value="Nicotinate-nucleotide--dimethylbenzimidazole phosphoribosyltransferase"/>
    <property type="match status" value="1"/>
</dbReference>
<dbReference type="FunFam" id="3.40.50.10210:FF:000001">
    <property type="entry name" value="Nicotinate-nucleotide--dimethylbenzimidazole phosphoribosyltransferase"/>
    <property type="match status" value="1"/>
</dbReference>
<dbReference type="Gene3D" id="1.10.1610.10">
    <property type="match status" value="1"/>
</dbReference>
<dbReference type="Gene3D" id="3.40.50.10210">
    <property type="match status" value="1"/>
</dbReference>
<dbReference type="HAMAP" id="MF_00230">
    <property type="entry name" value="CobT"/>
    <property type="match status" value="1"/>
</dbReference>
<dbReference type="InterPro" id="IPR003200">
    <property type="entry name" value="Nict_dMeBzImd_PRibTrfase"/>
</dbReference>
<dbReference type="InterPro" id="IPR017846">
    <property type="entry name" value="Nict_dMeBzImd_PRibTrfase_bact"/>
</dbReference>
<dbReference type="InterPro" id="IPR023195">
    <property type="entry name" value="Nict_dMeBzImd_PRibTrfase_N"/>
</dbReference>
<dbReference type="InterPro" id="IPR036087">
    <property type="entry name" value="Nict_dMeBzImd_PRibTrfase_sf"/>
</dbReference>
<dbReference type="NCBIfam" id="TIGR03160">
    <property type="entry name" value="cobT_DBIPRT"/>
    <property type="match status" value="1"/>
</dbReference>
<dbReference type="NCBIfam" id="NF000996">
    <property type="entry name" value="PRK00105.1"/>
    <property type="match status" value="1"/>
</dbReference>
<dbReference type="PANTHER" id="PTHR43463">
    <property type="entry name" value="NICOTINATE-NUCLEOTIDE--DIMETHYLBENZIMIDAZOLE PHOSPHORIBOSYLTRANSFERASE"/>
    <property type="match status" value="1"/>
</dbReference>
<dbReference type="PANTHER" id="PTHR43463:SF1">
    <property type="entry name" value="NICOTINATE-NUCLEOTIDE--DIMETHYLBENZIMIDAZOLE PHOSPHORIBOSYLTRANSFERASE"/>
    <property type="match status" value="1"/>
</dbReference>
<dbReference type="Pfam" id="PF02277">
    <property type="entry name" value="DBI_PRT"/>
    <property type="match status" value="1"/>
</dbReference>
<dbReference type="SUPFAM" id="SSF52733">
    <property type="entry name" value="Nicotinate mononucleotide:5,6-dimethylbenzimidazole phosphoribosyltransferase (CobT)"/>
    <property type="match status" value="1"/>
</dbReference>
<name>COBT_SHIB3</name>
<accession>B2TWR0</accession>
<reference key="1">
    <citation type="submission" date="2008-05" db="EMBL/GenBank/DDBJ databases">
        <title>Complete sequence of Shigella boydii serotype 18 strain BS512.</title>
        <authorList>
            <person name="Rasko D.A."/>
            <person name="Rosovitz M."/>
            <person name="Maurelli A.T."/>
            <person name="Myers G."/>
            <person name="Seshadri R."/>
            <person name="Cer R."/>
            <person name="Jiang L."/>
            <person name="Ravel J."/>
            <person name="Sebastian Y."/>
        </authorList>
    </citation>
    <scope>NUCLEOTIDE SEQUENCE [LARGE SCALE GENOMIC DNA]</scope>
    <source>
        <strain>CDC 3083-94 / BS512</strain>
    </source>
</reference>
<feature type="chain" id="PRO_1000100481" description="Nicotinate-nucleotide--dimethylbenzimidazole phosphoribosyltransferase">
    <location>
        <begin position="1"/>
        <end position="361"/>
    </location>
</feature>
<feature type="active site" description="Proton acceptor" evidence="1">
    <location>
        <position position="320"/>
    </location>
</feature>
<gene>
    <name evidence="1" type="primary">cobT</name>
    <name type="ordered locus">SbBS512_E0967</name>
</gene>
<comment type="function">
    <text evidence="1">Catalyzes the synthesis of alpha-ribazole-5'-phosphate from nicotinate mononucleotide (NAMN) and 5,6-dimethylbenzimidazole (DMB).</text>
</comment>
<comment type="catalytic activity">
    <reaction evidence="1">
        <text>5,6-dimethylbenzimidazole + nicotinate beta-D-ribonucleotide = alpha-ribazole 5'-phosphate + nicotinate + H(+)</text>
        <dbReference type="Rhea" id="RHEA:11196"/>
        <dbReference type="ChEBI" id="CHEBI:15378"/>
        <dbReference type="ChEBI" id="CHEBI:15890"/>
        <dbReference type="ChEBI" id="CHEBI:32544"/>
        <dbReference type="ChEBI" id="CHEBI:57502"/>
        <dbReference type="ChEBI" id="CHEBI:57918"/>
        <dbReference type="EC" id="2.4.2.21"/>
    </reaction>
</comment>
<comment type="pathway">
    <text evidence="1">Nucleoside biosynthesis; alpha-ribazole biosynthesis; alpha-ribazole from 5,6-dimethylbenzimidazole: step 1/2.</text>
</comment>
<comment type="subunit">
    <text evidence="1">Homodimer.</text>
</comment>
<comment type="similarity">
    <text evidence="1">Belongs to the CobT family.</text>
</comment>
<organism>
    <name type="scientific">Shigella boydii serotype 18 (strain CDC 3083-94 / BS512)</name>
    <dbReference type="NCBI Taxonomy" id="344609"/>
    <lineage>
        <taxon>Bacteria</taxon>
        <taxon>Pseudomonadati</taxon>
        <taxon>Pseudomonadota</taxon>
        <taxon>Gammaproteobacteria</taxon>
        <taxon>Enterobacterales</taxon>
        <taxon>Enterobacteriaceae</taxon>
        <taxon>Shigella</taxon>
    </lineage>
</organism>
<keyword id="KW-0169">Cobalamin biosynthesis</keyword>
<keyword id="KW-0328">Glycosyltransferase</keyword>
<keyword id="KW-1185">Reference proteome</keyword>
<keyword id="KW-0808">Transferase</keyword>
<sequence length="361" mass="37057">MQTLADLLNTIPAIDPAAMSRAQRHIDGLLKPVGSLGRLEALAIQLAGMPGLNGIPHVGKKAVLVMCADHGVWEEGVAISPKEVTAIQAENMTRGTTGVCVLAAQAGANVHVVDVGIDSAEPIPGLINMRVARGSGNIASAPAMSRRQAEKLLLDVICYTRELAKNGVTLFGVGELGMANTTPAAAAAIVSTITGRDPEEVVGIGANLPTDKLANKIDVVRRAITLNQPNPQDGVDVLAKVGGFDLVGMAGVMLGAASCGLPVLLDGFLSYAAALAACQMSPAIKPYLIPSHLSAEKGARIALSHLGLEPYLNMEMRLGEGSGAALAMPIIEAACAIYNNMGELAASNIVLPGNTTSDLNS</sequence>
<proteinExistence type="inferred from homology"/>
<evidence type="ECO:0000255" key="1">
    <source>
        <dbReference type="HAMAP-Rule" id="MF_00230"/>
    </source>
</evidence>